<comment type="function">
    <text evidence="2">Forms part of the ribosomal stalk which helps the ribosome interact with GTP-bound translation factors. Is thus essential for accurate translation.</text>
</comment>
<comment type="subunit">
    <text evidence="2">Homodimer. Part of the ribosomal stalk of the 50S ribosomal subunit. Forms a multimeric L10(L12)X complex, where L10 forms an elongated spine to which 2 to 4 L12 dimers bind in a sequential fashion. Binds GTP-bound translation factors.</text>
</comment>
<comment type="similarity">
    <text evidence="2">Belongs to the bacterial ribosomal protein bL12 family.</text>
</comment>
<protein>
    <recommendedName>
        <fullName evidence="2">Large ribosomal subunit protein bL12</fullName>
    </recommendedName>
    <alternativeName>
        <fullName evidence="3">50S ribosomal protein L7/L12</fullName>
    </alternativeName>
</protein>
<dbReference type="EMBL" id="AE002160">
    <property type="protein sequence ID" value="AAF39422.1"/>
    <property type="molecule type" value="Genomic_DNA"/>
</dbReference>
<dbReference type="PIR" id="H81684">
    <property type="entry name" value="H81684"/>
</dbReference>
<dbReference type="RefSeq" id="WP_010230916.1">
    <property type="nucleotide sequence ID" value="NZ_CP063055.1"/>
</dbReference>
<dbReference type="SMR" id="P38001"/>
<dbReference type="GeneID" id="1245949"/>
<dbReference type="KEGG" id="cmu:TC_0590"/>
<dbReference type="eggNOG" id="COG0222">
    <property type="taxonomic scope" value="Bacteria"/>
</dbReference>
<dbReference type="HOGENOM" id="CLU_086499_3_0_0"/>
<dbReference type="OrthoDB" id="9811748at2"/>
<dbReference type="Proteomes" id="UP000000800">
    <property type="component" value="Chromosome"/>
</dbReference>
<dbReference type="GO" id="GO:0022625">
    <property type="term" value="C:cytosolic large ribosomal subunit"/>
    <property type="evidence" value="ECO:0007669"/>
    <property type="project" value="TreeGrafter"/>
</dbReference>
<dbReference type="GO" id="GO:0003729">
    <property type="term" value="F:mRNA binding"/>
    <property type="evidence" value="ECO:0007669"/>
    <property type="project" value="TreeGrafter"/>
</dbReference>
<dbReference type="GO" id="GO:0003735">
    <property type="term" value="F:structural constituent of ribosome"/>
    <property type="evidence" value="ECO:0007669"/>
    <property type="project" value="InterPro"/>
</dbReference>
<dbReference type="GO" id="GO:0006412">
    <property type="term" value="P:translation"/>
    <property type="evidence" value="ECO:0007669"/>
    <property type="project" value="UniProtKB-UniRule"/>
</dbReference>
<dbReference type="CDD" id="cd00387">
    <property type="entry name" value="Ribosomal_L7_L12"/>
    <property type="match status" value="1"/>
</dbReference>
<dbReference type="FunFam" id="1.20.5.710:FF:000007">
    <property type="entry name" value="50S ribosomal protein L7/L12"/>
    <property type="match status" value="1"/>
</dbReference>
<dbReference type="FunFam" id="3.30.1390.10:FF:000001">
    <property type="entry name" value="50S ribosomal protein L7/L12"/>
    <property type="match status" value="1"/>
</dbReference>
<dbReference type="Gene3D" id="3.30.1390.10">
    <property type="match status" value="1"/>
</dbReference>
<dbReference type="Gene3D" id="1.20.5.710">
    <property type="entry name" value="Single helix bin"/>
    <property type="match status" value="1"/>
</dbReference>
<dbReference type="HAMAP" id="MF_00368">
    <property type="entry name" value="Ribosomal_bL12"/>
    <property type="match status" value="1"/>
</dbReference>
<dbReference type="InterPro" id="IPR000206">
    <property type="entry name" value="Ribosomal_bL12"/>
</dbReference>
<dbReference type="InterPro" id="IPR013823">
    <property type="entry name" value="Ribosomal_bL12_C"/>
</dbReference>
<dbReference type="InterPro" id="IPR014719">
    <property type="entry name" value="Ribosomal_bL12_C/ClpS-like"/>
</dbReference>
<dbReference type="InterPro" id="IPR008932">
    <property type="entry name" value="Ribosomal_bL12_oligo"/>
</dbReference>
<dbReference type="InterPro" id="IPR036235">
    <property type="entry name" value="Ribosomal_bL12_oligo_N_sf"/>
</dbReference>
<dbReference type="NCBIfam" id="TIGR00855">
    <property type="entry name" value="L12"/>
    <property type="match status" value="1"/>
</dbReference>
<dbReference type="PANTHER" id="PTHR45987">
    <property type="entry name" value="39S RIBOSOMAL PROTEIN L12"/>
    <property type="match status" value="1"/>
</dbReference>
<dbReference type="PANTHER" id="PTHR45987:SF4">
    <property type="entry name" value="LARGE RIBOSOMAL SUBUNIT PROTEIN BL12M"/>
    <property type="match status" value="1"/>
</dbReference>
<dbReference type="Pfam" id="PF00542">
    <property type="entry name" value="Ribosomal_L12"/>
    <property type="match status" value="1"/>
</dbReference>
<dbReference type="Pfam" id="PF16320">
    <property type="entry name" value="Ribosomal_L12_N"/>
    <property type="match status" value="1"/>
</dbReference>
<dbReference type="SUPFAM" id="SSF54736">
    <property type="entry name" value="ClpS-like"/>
    <property type="match status" value="1"/>
</dbReference>
<dbReference type="SUPFAM" id="SSF48300">
    <property type="entry name" value="Ribosomal protein L7/12, oligomerisation (N-terminal) domain"/>
    <property type="match status" value="1"/>
</dbReference>
<proteinExistence type="inferred from homology"/>
<feature type="initiator methionine" description="Removed" evidence="1">
    <location>
        <position position="1"/>
    </location>
</feature>
<feature type="chain" id="PRO_0000157517" description="Large ribosomal subunit protein bL12">
    <location>
        <begin position="2"/>
        <end position="130"/>
    </location>
</feature>
<feature type="sequence conflict" description="In Ref. 2." evidence="3" ref="2">
    <original>G</original>
    <variation>R</variation>
    <location>
        <position position="15"/>
    </location>
</feature>
<feature type="sequence conflict" description="In Ref. 2." evidence="3" ref="2">
    <original>A</original>
    <variation>R</variation>
    <location>
        <position position="52"/>
    </location>
</feature>
<reference key="1">
    <citation type="journal article" date="2000" name="Nucleic Acids Res.">
        <title>Genome sequences of Chlamydia trachomatis MoPn and Chlamydia pneumoniae AR39.</title>
        <authorList>
            <person name="Read T.D."/>
            <person name="Brunham R.C."/>
            <person name="Shen C."/>
            <person name="Gill S.R."/>
            <person name="Heidelberg J.F."/>
            <person name="White O."/>
            <person name="Hickey E.K."/>
            <person name="Peterson J.D."/>
            <person name="Utterback T.R."/>
            <person name="Berry K.J."/>
            <person name="Bass S."/>
            <person name="Linher K.D."/>
            <person name="Weidman J.F."/>
            <person name="Khouri H.M."/>
            <person name="Craven B."/>
            <person name="Bowman C."/>
            <person name="Dodson R.J."/>
            <person name="Gwinn M.L."/>
            <person name="Nelson W.C."/>
            <person name="DeBoy R.T."/>
            <person name="Kolonay J.F."/>
            <person name="McClarty G."/>
            <person name="Salzberg S.L."/>
            <person name="Eisen J.A."/>
            <person name="Fraser C.M."/>
        </authorList>
    </citation>
    <scope>NUCLEOTIDE SEQUENCE [LARGE SCALE GENOMIC DNA]</scope>
    <source>
        <strain>MoPn / Nigg</strain>
    </source>
</reference>
<reference key="2">
    <citation type="journal article" date="1990" name="J. Bacteriol.">
        <title>Cloning and characterization of RNA polymerase core subunits of Chlamydia trachomatis by using the polymerase chain reaction.</title>
        <authorList>
            <person name="Engel J.N."/>
            <person name="Pollack J."/>
            <person name="Malik F."/>
            <person name="Ganem D."/>
        </authorList>
    </citation>
    <scope>NUCLEOTIDE SEQUENCE [GENOMIC DNA] OF 3-128</scope>
    <source>
        <strain>MoPn</strain>
    </source>
</reference>
<organism>
    <name type="scientific">Chlamydia muridarum (strain MoPn / Nigg)</name>
    <dbReference type="NCBI Taxonomy" id="243161"/>
    <lineage>
        <taxon>Bacteria</taxon>
        <taxon>Pseudomonadati</taxon>
        <taxon>Chlamydiota</taxon>
        <taxon>Chlamydiia</taxon>
        <taxon>Chlamydiales</taxon>
        <taxon>Chlamydiaceae</taxon>
        <taxon>Chlamydia/Chlamydophila group</taxon>
        <taxon>Chlamydia</taxon>
    </lineage>
</organism>
<sequence>MTTESLETLVEQLSGLTVLELSQLKKMLEEKWDVTAAAPVVAVAGAAAAGDAPASAEPTEFAVILEDVPADKKIGVLKVVREVTGLALKEAKEMTEGLPKTVKEKTSKSDAEDTVKKLQEAGAKAVAKGL</sequence>
<name>RL7_CHLMU</name>
<evidence type="ECO:0000250" key="1"/>
<evidence type="ECO:0000255" key="2">
    <source>
        <dbReference type="HAMAP-Rule" id="MF_00368"/>
    </source>
</evidence>
<evidence type="ECO:0000305" key="3"/>
<accession>P38001</accession>
<keyword id="KW-0687">Ribonucleoprotein</keyword>
<keyword id="KW-0689">Ribosomal protein</keyword>
<gene>
    <name evidence="2" type="primary">rplL</name>
    <name type="ordered locus">TC_0590</name>
</gene>